<gene>
    <name evidence="1" type="primary">murC</name>
    <name type="ordered locus">Sbal_0403</name>
</gene>
<protein>
    <recommendedName>
        <fullName evidence="1">UDP-N-acetylmuramate--L-alanine ligase</fullName>
        <ecNumber evidence="1">6.3.2.8</ecNumber>
    </recommendedName>
    <alternativeName>
        <fullName evidence="1">UDP-N-acetylmuramoyl-L-alanine synthetase</fullName>
    </alternativeName>
</protein>
<sequence>MTKTERYAQLRSMIPEMRRIKRIHFVGIGGAGMGGIAEVLVNEGYQVSGSDIAQNAVTDRLCLLGAKIQIGHAAENVQQVDVVVVSTAINLENPEILAAKELRIPIVRRAEMLAELMRYRHGVAIAGTHGKTTTTSLIASVYGQAGRDPTFVIGGLLNSAGTNARLGTSRYLIAEADESDASFLHLQPMVSVVTNIEADHMDTYGGDFEKLKSTFVDFLHNLPFYGVAVVCIDDAVVREIMPRIGRQLVTYGFSDDADVQALNFSQQGHQCRFTVRRKGKADLDLVLNLPGQHNVLNALAAIAVATEDEIDDSAITQALVEFQGIGRRFQHLGKFATPKGEVMLVDDYGHHPSEVAATIKAARAGWPDKRLVMAYQPHRYTRTRDLYEDFVEVLSQVDCLLLLDVYSAGEAPITGADGRALCRSIRLRGQLDPIFIASPDQLAEVLPDVLQEGDLLLTQGAGNIGALSRLLATTELGFAVAELPAQAS</sequence>
<keyword id="KW-0067">ATP-binding</keyword>
<keyword id="KW-0131">Cell cycle</keyword>
<keyword id="KW-0132">Cell division</keyword>
<keyword id="KW-0133">Cell shape</keyword>
<keyword id="KW-0961">Cell wall biogenesis/degradation</keyword>
<keyword id="KW-0963">Cytoplasm</keyword>
<keyword id="KW-0436">Ligase</keyword>
<keyword id="KW-0547">Nucleotide-binding</keyword>
<keyword id="KW-0573">Peptidoglycan synthesis</keyword>
<keyword id="KW-1185">Reference proteome</keyword>
<evidence type="ECO:0000255" key="1">
    <source>
        <dbReference type="HAMAP-Rule" id="MF_00046"/>
    </source>
</evidence>
<feature type="chain" id="PRO_1000004403" description="UDP-N-acetylmuramate--L-alanine ligase">
    <location>
        <begin position="1"/>
        <end position="488"/>
    </location>
</feature>
<feature type="binding site" evidence="1">
    <location>
        <begin position="127"/>
        <end position="133"/>
    </location>
    <ligand>
        <name>ATP</name>
        <dbReference type="ChEBI" id="CHEBI:30616"/>
    </ligand>
</feature>
<accession>A3CZM2</accession>
<reference key="1">
    <citation type="submission" date="2007-02" db="EMBL/GenBank/DDBJ databases">
        <title>Complete sequence of chromosome of Shewanella baltica OS155.</title>
        <authorList>
            <consortium name="US DOE Joint Genome Institute"/>
            <person name="Copeland A."/>
            <person name="Lucas S."/>
            <person name="Lapidus A."/>
            <person name="Barry K."/>
            <person name="Detter J.C."/>
            <person name="Glavina del Rio T."/>
            <person name="Hammon N."/>
            <person name="Israni S."/>
            <person name="Dalin E."/>
            <person name="Tice H."/>
            <person name="Pitluck S."/>
            <person name="Sims D.R."/>
            <person name="Brettin T."/>
            <person name="Bruce D."/>
            <person name="Han C."/>
            <person name="Tapia R."/>
            <person name="Brainard J."/>
            <person name="Schmutz J."/>
            <person name="Larimer F."/>
            <person name="Land M."/>
            <person name="Hauser L."/>
            <person name="Kyrpides N."/>
            <person name="Mikhailova N."/>
            <person name="Brettar I."/>
            <person name="Klappenbach J."/>
            <person name="Konstantinidis K."/>
            <person name="Rodrigues J."/>
            <person name="Tiedje J."/>
            <person name="Richardson P."/>
        </authorList>
    </citation>
    <scope>NUCLEOTIDE SEQUENCE [LARGE SCALE GENOMIC DNA]</scope>
    <source>
        <strain>OS155 / ATCC BAA-1091</strain>
    </source>
</reference>
<organism>
    <name type="scientific">Shewanella baltica (strain OS155 / ATCC BAA-1091)</name>
    <dbReference type="NCBI Taxonomy" id="325240"/>
    <lineage>
        <taxon>Bacteria</taxon>
        <taxon>Pseudomonadati</taxon>
        <taxon>Pseudomonadota</taxon>
        <taxon>Gammaproteobacteria</taxon>
        <taxon>Alteromonadales</taxon>
        <taxon>Shewanellaceae</taxon>
        <taxon>Shewanella</taxon>
    </lineage>
</organism>
<proteinExistence type="inferred from homology"/>
<dbReference type="EC" id="6.3.2.8" evidence="1"/>
<dbReference type="EMBL" id="CP000563">
    <property type="protein sequence ID" value="ABN59935.1"/>
    <property type="molecule type" value="Genomic_DNA"/>
</dbReference>
<dbReference type="RefSeq" id="WP_006079895.1">
    <property type="nucleotide sequence ID" value="NC_009052.1"/>
</dbReference>
<dbReference type="SMR" id="A3CZM2"/>
<dbReference type="STRING" id="325240.Sbal_0403"/>
<dbReference type="GeneID" id="11770752"/>
<dbReference type="KEGG" id="sbl:Sbal_0403"/>
<dbReference type="HOGENOM" id="CLU_028104_2_2_6"/>
<dbReference type="OrthoDB" id="9804126at2"/>
<dbReference type="UniPathway" id="UPA00219"/>
<dbReference type="Proteomes" id="UP000001557">
    <property type="component" value="Chromosome"/>
</dbReference>
<dbReference type="GO" id="GO:0005737">
    <property type="term" value="C:cytoplasm"/>
    <property type="evidence" value="ECO:0007669"/>
    <property type="project" value="UniProtKB-SubCell"/>
</dbReference>
<dbReference type="GO" id="GO:0005524">
    <property type="term" value="F:ATP binding"/>
    <property type="evidence" value="ECO:0007669"/>
    <property type="project" value="UniProtKB-UniRule"/>
</dbReference>
<dbReference type="GO" id="GO:0008763">
    <property type="term" value="F:UDP-N-acetylmuramate-L-alanine ligase activity"/>
    <property type="evidence" value="ECO:0007669"/>
    <property type="project" value="UniProtKB-UniRule"/>
</dbReference>
<dbReference type="GO" id="GO:0051301">
    <property type="term" value="P:cell division"/>
    <property type="evidence" value="ECO:0007669"/>
    <property type="project" value="UniProtKB-KW"/>
</dbReference>
<dbReference type="GO" id="GO:0071555">
    <property type="term" value="P:cell wall organization"/>
    <property type="evidence" value="ECO:0007669"/>
    <property type="project" value="UniProtKB-KW"/>
</dbReference>
<dbReference type="GO" id="GO:0009252">
    <property type="term" value="P:peptidoglycan biosynthetic process"/>
    <property type="evidence" value="ECO:0007669"/>
    <property type="project" value="UniProtKB-UniRule"/>
</dbReference>
<dbReference type="GO" id="GO:0008360">
    <property type="term" value="P:regulation of cell shape"/>
    <property type="evidence" value="ECO:0007669"/>
    <property type="project" value="UniProtKB-KW"/>
</dbReference>
<dbReference type="FunFam" id="3.40.1190.10:FF:000001">
    <property type="entry name" value="UDP-N-acetylmuramate--L-alanine ligase"/>
    <property type="match status" value="1"/>
</dbReference>
<dbReference type="FunFam" id="3.40.50.720:FF:000046">
    <property type="entry name" value="UDP-N-acetylmuramate--L-alanine ligase"/>
    <property type="match status" value="1"/>
</dbReference>
<dbReference type="Gene3D" id="3.90.190.20">
    <property type="entry name" value="Mur ligase, C-terminal domain"/>
    <property type="match status" value="1"/>
</dbReference>
<dbReference type="Gene3D" id="3.40.1190.10">
    <property type="entry name" value="Mur-like, catalytic domain"/>
    <property type="match status" value="1"/>
</dbReference>
<dbReference type="Gene3D" id="3.40.50.720">
    <property type="entry name" value="NAD(P)-binding Rossmann-like Domain"/>
    <property type="match status" value="1"/>
</dbReference>
<dbReference type="HAMAP" id="MF_00046">
    <property type="entry name" value="MurC"/>
    <property type="match status" value="1"/>
</dbReference>
<dbReference type="InterPro" id="IPR036565">
    <property type="entry name" value="Mur-like_cat_sf"/>
</dbReference>
<dbReference type="InterPro" id="IPR004101">
    <property type="entry name" value="Mur_ligase_C"/>
</dbReference>
<dbReference type="InterPro" id="IPR036615">
    <property type="entry name" value="Mur_ligase_C_dom_sf"/>
</dbReference>
<dbReference type="InterPro" id="IPR013221">
    <property type="entry name" value="Mur_ligase_cen"/>
</dbReference>
<dbReference type="InterPro" id="IPR000713">
    <property type="entry name" value="Mur_ligase_N"/>
</dbReference>
<dbReference type="InterPro" id="IPR050061">
    <property type="entry name" value="MurCDEF_pg_biosynth"/>
</dbReference>
<dbReference type="InterPro" id="IPR005758">
    <property type="entry name" value="UDP-N-AcMur_Ala_ligase_MurC"/>
</dbReference>
<dbReference type="NCBIfam" id="TIGR01082">
    <property type="entry name" value="murC"/>
    <property type="match status" value="1"/>
</dbReference>
<dbReference type="PANTHER" id="PTHR43445:SF3">
    <property type="entry name" value="UDP-N-ACETYLMURAMATE--L-ALANINE LIGASE"/>
    <property type="match status" value="1"/>
</dbReference>
<dbReference type="PANTHER" id="PTHR43445">
    <property type="entry name" value="UDP-N-ACETYLMURAMATE--L-ALANINE LIGASE-RELATED"/>
    <property type="match status" value="1"/>
</dbReference>
<dbReference type="Pfam" id="PF01225">
    <property type="entry name" value="Mur_ligase"/>
    <property type="match status" value="1"/>
</dbReference>
<dbReference type="Pfam" id="PF02875">
    <property type="entry name" value="Mur_ligase_C"/>
    <property type="match status" value="1"/>
</dbReference>
<dbReference type="Pfam" id="PF08245">
    <property type="entry name" value="Mur_ligase_M"/>
    <property type="match status" value="1"/>
</dbReference>
<dbReference type="SUPFAM" id="SSF51984">
    <property type="entry name" value="MurCD N-terminal domain"/>
    <property type="match status" value="1"/>
</dbReference>
<dbReference type="SUPFAM" id="SSF53623">
    <property type="entry name" value="MurD-like peptide ligases, catalytic domain"/>
    <property type="match status" value="1"/>
</dbReference>
<dbReference type="SUPFAM" id="SSF53244">
    <property type="entry name" value="MurD-like peptide ligases, peptide-binding domain"/>
    <property type="match status" value="1"/>
</dbReference>
<name>MURC_SHEB5</name>
<comment type="function">
    <text evidence="1">Cell wall formation.</text>
</comment>
<comment type="catalytic activity">
    <reaction evidence="1">
        <text>UDP-N-acetyl-alpha-D-muramate + L-alanine + ATP = UDP-N-acetyl-alpha-D-muramoyl-L-alanine + ADP + phosphate + H(+)</text>
        <dbReference type="Rhea" id="RHEA:23372"/>
        <dbReference type="ChEBI" id="CHEBI:15378"/>
        <dbReference type="ChEBI" id="CHEBI:30616"/>
        <dbReference type="ChEBI" id="CHEBI:43474"/>
        <dbReference type="ChEBI" id="CHEBI:57972"/>
        <dbReference type="ChEBI" id="CHEBI:70757"/>
        <dbReference type="ChEBI" id="CHEBI:83898"/>
        <dbReference type="ChEBI" id="CHEBI:456216"/>
        <dbReference type="EC" id="6.3.2.8"/>
    </reaction>
</comment>
<comment type="pathway">
    <text evidence="1">Cell wall biogenesis; peptidoglycan biosynthesis.</text>
</comment>
<comment type="subcellular location">
    <subcellularLocation>
        <location evidence="1">Cytoplasm</location>
    </subcellularLocation>
</comment>
<comment type="similarity">
    <text evidence="1">Belongs to the MurCDEF family.</text>
</comment>